<gene>
    <name evidence="1" type="primary">lamB</name>
    <name type="ordered locus">Asuc_0322</name>
</gene>
<evidence type="ECO:0000255" key="1">
    <source>
        <dbReference type="HAMAP-Rule" id="MF_01301"/>
    </source>
</evidence>
<name>LAMB_ACTSZ</name>
<protein>
    <recommendedName>
        <fullName evidence="1">Maltoporin</fullName>
    </recommendedName>
    <alternativeName>
        <fullName evidence="1">Maltose-inducible porin</fullName>
    </alternativeName>
</protein>
<keyword id="KW-0998">Cell outer membrane</keyword>
<keyword id="KW-0406">Ion transport</keyword>
<keyword id="KW-0472">Membrane</keyword>
<keyword id="KW-0626">Porin</keyword>
<keyword id="KW-1185">Reference proteome</keyword>
<keyword id="KW-0732">Signal</keyword>
<keyword id="KW-0762">Sugar transport</keyword>
<keyword id="KW-0812">Transmembrane</keyword>
<keyword id="KW-1134">Transmembrane beta strand</keyword>
<keyword id="KW-0813">Transport</keyword>
<dbReference type="EMBL" id="CP000746">
    <property type="protein sequence ID" value="ABR73700.1"/>
    <property type="molecule type" value="Genomic_DNA"/>
</dbReference>
<dbReference type="RefSeq" id="WP_011978975.1">
    <property type="nucleotide sequence ID" value="NC_009655.1"/>
</dbReference>
<dbReference type="SMR" id="A6VL53"/>
<dbReference type="STRING" id="339671.Asuc_0322"/>
<dbReference type="KEGG" id="asu:Asuc_0322"/>
<dbReference type="eggNOG" id="COG4580">
    <property type="taxonomic scope" value="Bacteria"/>
</dbReference>
<dbReference type="HOGENOM" id="CLU_032473_4_1_6"/>
<dbReference type="OrthoDB" id="106611at2"/>
<dbReference type="Proteomes" id="UP000001114">
    <property type="component" value="Chromosome"/>
</dbReference>
<dbReference type="GO" id="GO:0009279">
    <property type="term" value="C:cell outer membrane"/>
    <property type="evidence" value="ECO:0007669"/>
    <property type="project" value="UniProtKB-SubCell"/>
</dbReference>
<dbReference type="GO" id="GO:0046930">
    <property type="term" value="C:pore complex"/>
    <property type="evidence" value="ECO:0007669"/>
    <property type="project" value="UniProtKB-KW"/>
</dbReference>
<dbReference type="GO" id="GO:0042958">
    <property type="term" value="F:maltodextrin transmembrane transporter activity"/>
    <property type="evidence" value="ECO:0007669"/>
    <property type="project" value="InterPro"/>
</dbReference>
<dbReference type="GO" id="GO:0015481">
    <property type="term" value="F:maltose transporting porin activity"/>
    <property type="evidence" value="ECO:0007669"/>
    <property type="project" value="InterPro"/>
</dbReference>
<dbReference type="GO" id="GO:0006811">
    <property type="term" value="P:monoatomic ion transport"/>
    <property type="evidence" value="ECO:0007669"/>
    <property type="project" value="UniProtKB-KW"/>
</dbReference>
<dbReference type="CDD" id="cd01346">
    <property type="entry name" value="Maltoporin-like"/>
    <property type="match status" value="1"/>
</dbReference>
<dbReference type="Gene3D" id="2.40.170.10">
    <property type="entry name" value="Porin, LamB type"/>
    <property type="match status" value="1"/>
</dbReference>
<dbReference type="HAMAP" id="MF_01301">
    <property type="entry name" value="LamB"/>
    <property type="match status" value="1"/>
</dbReference>
<dbReference type="InterPro" id="IPR050286">
    <property type="entry name" value="G_neg_Bact_CarbUptk_Porin"/>
</dbReference>
<dbReference type="InterPro" id="IPR023738">
    <property type="entry name" value="Maltoporin"/>
</dbReference>
<dbReference type="InterPro" id="IPR003192">
    <property type="entry name" value="Porin_LamB"/>
</dbReference>
<dbReference type="InterPro" id="IPR036998">
    <property type="entry name" value="Porin_LamB_sf"/>
</dbReference>
<dbReference type="NCBIfam" id="NF006860">
    <property type="entry name" value="PRK09360.1"/>
    <property type="match status" value="1"/>
</dbReference>
<dbReference type="PANTHER" id="PTHR38762">
    <property type="entry name" value="CRYPTIC OUTER MEMBRANE PORIN BGLH-RELATED"/>
    <property type="match status" value="1"/>
</dbReference>
<dbReference type="PANTHER" id="PTHR38762:SF1">
    <property type="entry name" value="CRYPTIC OUTER MEMBRANE PORIN BGLH-RELATED"/>
    <property type="match status" value="1"/>
</dbReference>
<dbReference type="Pfam" id="PF02264">
    <property type="entry name" value="LamB"/>
    <property type="match status" value="1"/>
</dbReference>
<dbReference type="SUPFAM" id="SSF56935">
    <property type="entry name" value="Porins"/>
    <property type="match status" value="1"/>
</dbReference>
<reference key="1">
    <citation type="journal article" date="2010" name="BMC Genomics">
        <title>A genomic perspective on the potential of Actinobacillus succinogenes for industrial succinate production.</title>
        <authorList>
            <person name="McKinlay J.B."/>
            <person name="Laivenieks M."/>
            <person name="Schindler B.D."/>
            <person name="McKinlay A.A."/>
            <person name="Siddaramappa S."/>
            <person name="Challacombe J.F."/>
            <person name="Lowry S.R."/>
            <person name="Clum A."/>
            <person name="Lapidus A.L."/>
            <person name="Burkhart K.B."/>
            <person name="Harkins V."/>
            <person name="Vieille C."/>
        </authorList>
    </citation>
    <scope>NUCLEOTIDE SEQUENCE [LARGE SCALE GENOMIC DNA]</scope>
    <source>
        <strain>ATCC 55618 / DSM 22257 / CCUG 43843 / 130Z</strain>
    </source>
</reference>
<accession>A6VL53</accession>
<sequence>MNNKKTLLAVAISGMMFATSAAAVDFHGYARSGIGWTSGGGEQTALQVNGGGSKYRLGNETETYVELKLGQELFKEGNKSIYLDSNIAYSVDQQVDWEATDPALREINVQFKNFAEDLLPDATLWAGKRFYQRHDVHMNDFYYWDISGPGAGVENINLGFGKLSLAVTRNTEGGATATYGTDKVYYIDDNGQIQSRFEERKANVYNDVFDIRLAELNVNPNGKLEIGFDYGNAHTKNGYYLEPGASKNGYMITLEHTQGEFFGGFNKFVAQYATDSMTSWNTGHSQGSSVNNNGHMLRLIDHGVVQFSPKVEMMYALIYEKTDLDNNQGKTWYSAGIRPMYKWNKTMSTLIELGYDRIKDQSSGEKNDLAKITLAQQWQAGDSIWARPAIRVFGTYGRWNDKFNITDRTNAGYKAKDAEFVAGVQFEAWW</sequence>
<organism>
    <name type="scientific">Actinobacillus succinogenes (strain ATCC 55618 / DSM 22257 / CCUG 43843 / 130Z)</name>
    <dbReference type="NCBI Taxonomy" id="339671"/>
    <lineage>
        <taxon>Bacteria</taxon>
        <taxon>Pseudomonadati</taxon>
        <taxon>Pseudomonadota</taxon>
        <taxon>Gammaproteobacteria</taxon>
        <taxon>Pasteurellales</taxon>
        <taxon>Pasteurellaceae</taxon>
        <taxon>Actinobacillus</taxon>
    </lineage>
</organism>
<feature type="signal peptide" evidence="1">
    <location>
        <begin position="1"/>
        <end position="23"/>
    </location>
</feature>
<feature type="chain" id="PRO_5000258698" description="Maltoporin">
    <location>
        <begin position="24"/>
        <end position="430"/>
    </location>
</feature>
<feature type="site" description="Greasy slide, important in sugar transport" evidence="1">
    <location>
        <position position="29"/>
    </location>
</feature>
<feature type="site" description="Greasy slide, important in sugar transport" evidence="1">
    <location>
        <position position="64"/>
    </location>
</feature>
<feature type="site" description="Greasy slide, important in sugar transport" evidence="1">
    <location>
        <position position="97"/>
    </location>
</feature>
<feature type="site" description="Important in sugar transport" evidence="1">
    <location>
        <position position="142"/>
    </location>
</feature>
<feature type="site" description="Greasy slide, important in sugar transport" evidence="1">
    <location>
        <position position="265"/>
    </location>
</feature>
<feature type="site" description="Greasy slide, important in sugar transport" evidence="1">
    <location>
        <position position="385"/>
    </location>
</feature>
<feature type="site" description="Greasy slide, important in sugar transport" evidence="1">
    <location>
        <position position="429"/>
    </location>
</feature>
<proteinExistence type="inferred from homology"/>
<comment type="function">
    <text evidence="1">Involved in the transport of maltose and maltodextrins.</text>
</comment>
<comment type="catalytic activity">
    <reaction evidence="1">
        <text>beta-maltose(in) = beta-maltose(out)</text>
        <dbReference type="Rhea" id="RHEA:29731"/>
        <dbReference type="ChEBI" id="CHEBI:18147"/>
    </reaction>
</comment>
<comment type="subunit">
    <text evidence="1">Homotrimer formed of three 18-stranded antiparallel beta-barrels, containing three independent channels.</text>
</comment>
<comment type="subcellular location">
    <subcellularLocation>
        <location evidence="1">Cell outer membrane</location>
        <topology evidence="1">Multi-pass membrane protein</topology>
    </subcellularLocation>
</comment>
<comment type="induction">
    <text evidence="1">By maltose.</text>
</comment>
<comment type="similarity">
    <text evidence="1">Belongs to the porin LamB (TC 1.B.3) family.</text>
</comment>